<sequence length="130" mass="14593">MTTKRKAYVRTMAPNWWQQLGFYRFYMLREGTSVPTVWFSILLIYGVFALKSGPAGWEGFVGFLQNPLVLLINIITLLAAVLHTKTWFELAPKAANIIVKDEKMGPEPVIKALWVVTIVATAIILAVALL</sequence>
<evidence type="ECO:0000255" key="1">
    <source>
        <dbReference type="HAMAP-Rule" id="MF_00708"/>
    </source>
</evidence>
<comment type="function">
    <text evidence="1">Two distinct, membrane-bound, FAD-containing enzymes are responsible for the catalysis of fumarate and succinate interconversion; fumarate reductase is used in anaerobic growth, and succinate dehydrogenase is used in aerobic growth. Anchors the catalytic components of the fumarate reductase complex to the cell inner membrane, binds quinones.</text>
</comment>
<comment type="subunit">
    <text evidence="1">Part of an enzyme complex containing four subunits: a flavoprotein (FrdA), an iron-sulfur protein (FrdB), and two hydrophobic anchor proteins (FrdC and FrdD).</text>
</comment>
<comment type="subcellular location">
    <subcellularLocation>
        <location evidence="1">Cell inner membrane</location>
        <topology evidence="1">Multi-pass membrane protein</topology>
    </subcellularLocation>
</comment>
<comment type="similarity">
    <text evidence="1">Belongs to the FrdC family.</text>
</comment>
<reference key="1">
    <citation type="journal article" date="2006" name="PLoS Genet.">
        <title>The complete genome sequence and comparative genome analysis of the high pathogenicity Yersinia enterocolitica strain 8081.</title>
        <authorList>
            <person name="Thomson N.R."/>
            <person name="Howard S."/>
            <person name="Wren B.W."/>
            <person name="Holden M.T.G."/>
            <person name="Crossman L."/>
            <person name="Challis G.L."/>
            <person name="Churcher C."/>
            <person name="Mungall K."/>
            <person name="Brooks K."/>
            <person name="Chillingworth T."/>
            <person name="Feltwell T."/>
            <person name="Abdellah Z."/>
            <person name="Hauser H."/>
            <person name="Jagels K."/>
            <person name="Maddison M."/>
            <person name="Moule S."/>
            <person name="Sanders M."/>
            <person name="Whitehead S."/>
            <person name="Quail M.A."/>
            <person name="Dougan G."/>
            <person name="Parkhill J."/>
            <person name="Prentice M.B."/>
        </authorList>
    </citation>
    <scope>NUCLEOTIDE SEQUENCE [LARGE SCALE GENOMIC DNA]</scope>
    <source>
        <strain>NCTC 13174 / 8081</strain>
    </source>
</reference>
<accession>A1JIQ1</accession>
<keyword id="KW-0997">Cell inner membrane</keyword>
<keyword id="KW-1003">Cell membrane</keyword>
<keyword id="KW-0472">Membrane</keyword>
<keyword id="KW-0812">Transmembrane</keyword>
<keyword id="KW-1133">Transmembrane helix</keyword>
<name>FRDC_YERE8</name>
<dbReference type="EMBL" id="AM286415">
    <property type="protein sequence ID" value="CAL10492.1"/>
    <property type="molecule type" value="Genomic_DNA"/>
</dbReference>
<dbReference type="RefSeq" id="WP_005175556.1">
    <property type="nucleotide sequence ID" value="NC_008800.1"/>
</dbReference>
<dbReference type="RefSeq" id="YP_001004738.1">
    <property type="nucleotide sequence ID" value="NC_008800.1"/>
</dbReference>
<dbReference type="SMR" id="A1JIQ1"/>
<dbReference type="GeneID" id="93968842"/>
<dbReference type="KEGG" id="yen:YE0362"/>
<dbReference type="PATRIC" id="fig|393305.7.peg.459"/>
<dbReference type="eggNOG" id="COG3029">
    <property type="taxonomic scope" value="Bacteria"/>
</dbReference>
<dbReference type="HOGENOM" id="CLU_156492_0_0_6"/>
<dbReference type="OrthoDB" id="8909678at2"/>
<dbReference type="Proteomes" id="UP000000642">
    <property type="component" value="Chromosome"/>
</dbReference>
<dbReference type="GO" id="GO:0045283">
    <property type="term" value="C:fumarate reductase complex"/>
    <property type="evidence" value="ECO:0007669"/>
    <property type="project" value="UniProtKB-UniRule"/>
</dbReference>
<dbReference type="GO" id="GO:0005886">
    <property type="term" value="C:plasma membrane"/>
    <property type="evidence" value="ECO:0007669"/>
    <property type="project" value="UniProtKB-SubCell"/>
</dbReference>
<dbReference type="GO" id="GO:0000104">
    <property type="term" value="F:succinate dehydrogenase activity"/>
    <property type="evidence" value="ECO:0007669"/>
    <property type="project" value="UniProtKB-UniRule"/>
</dbReference>
<dbReference type="CDD" id="cd00546">
    <property type="entry name" value="QFR_TypeD_subunitC"/>
    <property type="match status" value="1"/>
</dbReference>
<dbReference type="Gene3D" id="1.20.1300.10">
    <property type="entry name" value="Fumarate reductase/succinate dehydrogenase, transmembrane subunit"/>
    <property type="match status" value="1"/>
</dbReference>
<dbReference type="HAMAP" id="MF_00708">
    <property type="entry name" value="Fumarate_red_C"/>
    <property type="match status" value="1"/>
</dbReference>
<dbReference type="InterPro" id="IPR003510">
    <property type="entry name" value="Fumarate_red_C"/>
</dbReference>
<dbReference type="InterPro" id="IPR034804">
    <property type="entry name" value="SQR/QFR_C/D"/>
</dbReference>
<dbReference type="NCBIfam" id="NF003445">
    <property type="entry name" value="PRK04987.1"/>
    <property type="match status" value="1"/>
</dbReference>
<dbReference type="Pfam" id="PF02300">
    <property type="entry name" value="Fumarate_red_C"/>
    <property type="match status" value="1"/>
</dbReference>
<dbReference type="PIRSF" id="PIRSF000180">
    <property type="entry name" value="FrdC"/>
    <property type="match status" value="1"/>
</dbReference>
<dbReference type="SUPFAM" id="SSF81343">
    <property type="entry name" value="Fumarate reductase respiratory complex transmembrane subunits"/>
    <property type="match status" value="1"/>
</dbReference>
<organism>
    <name type="scientific">Yersinia enterocolitica serotype O:8 / biotype 1B (strain NCTC 13174 / 8081)</name>
    <dbReference type="NCBI Taxonomy" id="393305"/>
    <lineage>
        <taxon>Bacteria</taxon>
        <taxon>Pseudomonadati</taxon>
        <taxon>Pseudomonadota</taxon>
        <taxon>Gammaproteobacteria</taxon>
        <taxon>Enterobacterales</taxon>
        <taxon>Yersiniaceae</taxon>
        <taxon>Yersinia</taxon>
    </lineage>
</organism>
<feature type="chain" id="PRO_1000045538" description="Fumarate reductase subunit C">
    <location>
        <begin position="1"/>
        <end position="130"/>
    </location>
</feature>
<feature type="transmembrane region" description="Helical" evidence="1">
    <location>
        <begin position="37"/>
        <end position="57"/>
    </location>
</feature>
<feature type="transmembrane region" description="Helical" evidence="1">
    <location>
        <begin position="60"/>
        <end position="80"/>
    </location>
</feature>
<feature type="transmembrane region" description="Helical" evidence="1">
    <location>
        <begin position="109"/>
        <end position="129"/>
    </location>
</feature>
<protein>
    <recommendedName>
        <fullName evidence="1">Fumarate reductase subunit C</fullName>
    </recommendedName>
    <alternativeName>
        <fullName evidence="1">Fumarate reductase 15 kDa hydrophobic protein</fullName>
    </alternativeName>
    <alternativeName>
        <fullName evidence="1">Quinol-fumarate reductase subunit C</fullName>
        <shortName evidence="1">QFR subunit C</shortName>
    </alternativeName>
</protein>
<proteinExistence type="inferred from homology"/>
<gene>
    <name evidence="1" type="primary">frdC</name>
    <name type="ordered locus">YE0362</name>
</gene>